<protein>
    <recommendedName>
        <fullName>Pentatricopeptide repeat-containing protein At2g44880</fullName>
    </recommendedName>
</protein>
<feature type="chain" id="PRO_0000356060" description="Pentatricopeptide repeat-containing protein At2g44880">
    <location>
        <begin position="1"/>
        <end position="555"/>
    </location>
</feature>
<feature type="repeat" description="PPR 1">
    <location>
        <begin position="41"/>
        <end position="75"/>
    </location>
</feature>
<feature type="repeat" description="PPR 2">
    <location>
        <begin position="77"/>
        <end position="111"/>
    </location>
</feature>
<feature type="repeat" description="PPR 3">
    <location>
        <begin position="112"/>
        <end position="142"/>
    </location>
</feature>
<feature type="repeat" description="PPR 4">
    <location>
        <begin position="143"/>
        <end position="173"/>
    </location>
</feature>
<feature type="repeat" description="PPR 5">
    <location>
        <begin position="175"/>
        <end position="205"/>
    </location>
</feature>
<feature type="repeat" description="PPR 6">
    <location>
        <begin position="206"/>
        <end position="240"/>
    </location>
</feature>
<feature type="repeat" description="PPR 7">
    <location>
        <begin position="241"/>
        <end position="267"/>
    </location>
</feature>
<feature type="repeat" description="PPR 8">
    <location>
        <begin position="273"/>
        <end position="307"/>
    </location>
</feature>
<feature type="repeat" description="PPR 9">
    <location>
        <begin position="308"/>
        <end position="342"/>
    </location>
</feature>
<feature type="repeat" description="PPR 10">
    <location>
        <begin position="343"/>
        <end position="370"/>
    </location>
</feature>
<feature type="repeat" description="PPR 11">
    <location>
        <begin position="373"/>
        <end position="407"/>
    </location>
</feature>
<feature type="repeat" description="PPR 12">
    <location>
        <begin position="408"/>
        <end position="438"/>
    </location>
</feature>
<feature type="region of interest" description="Type E motif">
    <location>
        <begin position="443"/>
        <end position="518"/>
    </location>
</feature>
<feature type="region of interest" description="Type E(+) motif">
    <location>
        <begin position="519"/>
        <end position="549"/>
    </location>
</feature>
<feature type="sequence conflict" description="In Ref. 3; ABE65907." evidence="1" ref="3">
    <original>R</original>
    <variation>T</variation>
    <location>
        <position position="259"/>
    </location>
</feature>
<gene>
    <name type="primary">PCMP-E9</name>
    <name type="ordered locus">At2g44880</name>
    <name type="ORF">T13E15.11</name>
</gene>
<organism>
    <name type="scientific">Arabidopsis thaliana</name>
    <name type="common">Mouse-ear cress</name>
    <dbReference type="NCBI Taxonomy" id="3702"/>
    <lineage>
        <taxon>Eukaryota</taxon>
        <taxon>Viridiplantae</taxon>
        <taxon>Streptophyta</taxon>
        <taxon>Embryophyta</taxon>
        <taxon>Tracheophyta</taxon>
        <taxon>Spermatophyta</taxon>
        <taxon>Magnoliopsida</taxon>
        <taxon>eudicotyledons</taxon>
        <taxon>Gunneridae</taxon>
        <taxon>Pentapetalae</taxon>
        <taxon>rosids</taxon>
        <taxon>malvids</taxon>
        <taxon>Brassicales</taxon>
        <taxon>Brassicaceae</taxon>
        <taxon>Camelineae</taxon>
        <taxon>Arabidopsis</taxon>
    </lineage>
</organism>
<proteinExistence type="evidence at transcript level"/>
<evidence type="ECO:0000305" key="1"/>
<keyword id="KW-1185">Reference proteome</keyword>
<keyword id="KW-0677">Repeat</keyword>
<name>PP201_ARATH</name>
<reference key="1">
    <citation type="journal article" date="1999" name="Nature">
        <title>Sequence and analysis of chromosome 2 of the plant Arabidopsis thaliana.</title>
        <authorList>
            <person name="Lin X."/>
            <person name="Kaul S."/>
            <person name="Rounsley S.D."/>
            <person name="Shea T.P."/>
            <person name="Benito M.-I."/>
            <person name="Town C.D."/>
            <person name="Fujii C.Y."/>
            <person name="Mason T.M."/>
            <person name="Bowman C.L."/>
            <person name="Barnstead M.E."/>
            <person name="Feldblyum T.V."/>
            <person name="Buell C.R."/>
            <person name="Ketchum K.A."/>
            <person name="Lee J.J."/>
            <person name="Ronning C.M."/>
            <person name="Koo H.L."/>
            <person name="Moffat K.S."/>
            <person name="Cronin L.A."/>
            <person name="Shen M."/>
            <person name="Pai G."/>
            <person name="Van Aken S."/>
            <person name="Umayam L."/>
            <person name="Tallon L.J."/>
            <person name="Gill J.E."/>
            <person name="Adams M.D."/>
            <person name="Carrera A.J."/>
            <person name="Creasy T.H."/>
            <person name="Goodman H.M."/>
            <person name="Somerville C.R."/>
            <person name="Copenhaver G.P."/>
            <person name="Preuss D."/>
            <person name="Nierman W.C."/>
            <person name="White O."/>
            <person name="Eisen J.A."/>
            <person name="Salzberg S.L."/>
            <person name="Fraser C.M."/>
            <person name="Venter J.C."/>
        </authorList>
    </citation>
    <scope>NUCLEOTIDE SEQUENCE [LARGE SCALE GENOMIC DNA]</scope>
    <source>
        <strain>cv. Columbia</strain>
    </source>
</reference>
<reference key="2">
    <citation type="journal article" date="2017" name="Plant J.">
        <title>Araport11: a complete reannotation of the Arabidopsis thaliana reference genome.</title>
        <authorList>
            <person name="Cheng C.Y."/>
            <person name="Krishnakumar V."/>
            <person name="Chan A.P."/>
            <person name="Thibaud-Nissen F."/>
            <person name="Schobel S."/>
            <person name="Town C.D."/>
        </authorList>
    </citation>
    <scope>GENOME REANNOTATION</scope>
    <source>
        <strain>cv. Columbia</strain>
    </source>
</reference>
<reference key="3">
    <citation type="journal article" date="2006" name="Plant Biotechnol. J.">
        <title>Simultaneous high-throughput recombinational cloning of open reading frames in closed and open configurations.</title>
        <authorList>
            <person name="Underwood B.A."/>
            <person name="Vanderhaeghen R."/>
            <person name="Whitford R."/>
            <person name="Town C.D."/>
            <person name="Hilson P."/>
        </authorList>
    </citation>
    <scope>NUCLEOTIDE SEQUENCE [LARGE SCALE MRNA]</scope>
    <source>
        <strain>cv. Columbia</strain>
    </source>
</reference>
<reference key="4">
    <citation type="journal article" date="2000" name="Plant Mol. Biol.">
        <title>In Arabidopsis thaliana, 1% of the genome codes for a novel protein family unique to plants.</title>
        <authorList>
            <person name="Aubourg S."/>
            <person name="Boudet N."/>
            <person name="Kreis M."/>
            <person name="Lecharny A."/>
        </authorList>
    </citation>
    <scope>GENE FAMILY</scope>
</reference>
<reference key="5">
    <citation type="journal article" date="2004" name="Plant Cell">
        <title>Genome-wide analysis of Arabidopsis pentatricopeptide repeat proteins reveals their essential role in organelle biogenesis.</title>
        <authorList>
            <person name="Lurin C."/>
            <person name="Andres C."/>
            <person name="Aubourg S."/>
            <person name="Bellaoui M."/>
            <person name="Bitton F."/>
            <person name="Bruyere C."/>
            <person name="Caboche M."/>
            <person name="Debast C."/>
            <person name="Gualberto J."/>
            <person name="Hoffmann B."/>
            <person name="Lecharny A."/>
            <person name="Le Ret M."/>
            <person name="Martin-Magniette M.-L."/>
            <person name="Mireau H."/>
            <person name="Peeters N."/>
            <person name="Renou J.-P."/>
            <person name="Szurek B."/>
            <person name="Taconnat L."/>
            <person name="Small I."/>
        </authorList>
    </citation>
    <scope>GENE FAMILY</scope>
</reference>
<dbReference type="EMBL" id="AC002388">
    <property type="protein sequence ID" value="AAC31836.1"/>
    <property type="molecule type" value="Genomic_DNA"/>
</dbReference>
<dbReference type="EMBL" id="CP002685">
    <property type="protein sequence ID" value="AEC10479.1"/>
    <property type="molecule type" value="Genomic_DNA"/>
</dbReference>
<dbReference type="EMBL" id="DQ446623">
    <property type="protein sequence ID" value="ABE65907.1"/>
    <property type="molecule type" value="mRNA"/>
</dbReference>
<dbReference type="PIR" id="T00405">
    <property type="entry name" value="T00405"/>
</dbReference>
<dbReference type="SMR" id="Q1PEU4"/>
<dbReference type="FunCoup" id="Q1PEU4">
    <property type="interactions" value="207"/>
</dbReference>
<dbReference type="STRING" id="3702.Q1PEU4"/>
<dbReference type="PaxDb" id="3702-AT2G44880.1"/>
<dbReference type="EnsemblPlants" id="AT2G44880.1">
    <property type="protein sequence ID" value="AT2G44880.1"/>
    <property type="gene ID" value="AT2G44880"/>
</dbReference>
<dbReference type="GeneID" id="819097"/>
<dbReference type="Gramene" id="AT2G44880.1">
    <property type="protein sequence ID" value="AT2G44880.1"/>
    <property type="gene ID" value="AT2G44880"/>
</dbReference>
<dbReference type="KEGG" id="ath:AT2G44880"/>
<dbReference type="Araport" id="AT2G44880"/>
<dbReference type="TAIR" id="AT2G44880">
    <property type="gene designation" value="AHG11"/>
</dbReference>
<dbReference type="eggNOG" id="KOG4197">
    <property type="taxonomic scope" value="Eukaryota"/>
</dbReference>
<dbReference type="HOGENOM" id="CLU_002706_0_1_1"/>
<dbReference type="InParanoid" id="Q1PEU4"/>
<dbReference type="OMA" id="WEGLEIH"/>
<dbReference type="PhylomeDB" id="Q1PEU4"/>
<dbReference type="PRO" id="PR:Q1PEU4"/>
<dbReference type="Proteomes" id="UP000006548">
    <property type="component" value="Chromosome 2"/>
</dbReference>
<dbReference type="ExpressionAtlas" id="Q1PEU4">
    <property type="expression patterns" value="baseline and differential"/>
</dbReference>
<dbReference type="GO" id="GO:0003723">
    <property type="term" value="F:RNA binding"/>
    <property type="evidence" value="ECO:0007669"/>
    <property type="project" value="InterPro"/>
</dbReference>
<dbReference type="GO" id="GO:0009451">
    <property type="term" value="P:RNA modification"/>
    <property type="evidence" value="ECO:0007669"/>
    <property type="project" value="InterPro"/>
</dbReference>
<dbReference type="FunFam" id="1.25.40.10:FF:000364">
    <property type="entry name" value="Pentatricopeptide repeat (PPR-like) superfamily protein"/>
    <property type="match status" value="1"/>
</dbReference>
<dbReference type="FunFam" id="1.25.40.10:FF:002586">
    <property type="entry name" value="Pentatricopeptide repeat-containing protein At2g44880"/>
    <property type="match status" value="1"/>
</dbReference>
<dbReference type="FunFam" id="1.25.40.10:FF:000184">
    <property type="entry name" value="Pentatricopeptide repeat-containing protein, chloroplastic"/>
    <property type="match status" value="1"/>
</dbReference>
<dbReference type="Gene3D" id="1.25.40.10">
    <property type="entry name" value="Tetratricopeptide repeat domain"/>
    <property type="match status" value="5"/>
</dbReference>
<dbReference type="InterPro" id="IPR046848">
    <property type="entry name" value="E_motif"/>
</dbReference>
<dbReference type="InterPro" id="IPR002885">
    <property type="entry name" value="Pentatricopeptide_rpt"/>
</dbReference>
<dbReference type="InterPro" id="IPR046960">
    <property type="entry name" value="PPR_At4g14850-like_plant"/>
</dbReference>
<dbReference type="InterPro" id="IPR011990">
    <property type="entry name" value="TPR-like_helical_dom_sf"/>
</dbReference>
<dbReference type="NCBIfam" id="TIGR00756">
    <property type="entry name" value="PPR"/>
    <property type="match status" value="6"/>
</dbReference>
<dbReference type="PANTHER" id="PTHR47926:SF437">
    <property type="entry name" value="PENTACOTRIPEPTIDE-REPEAT REGION OF PRORP DOMAIN-CONTAINING PROTEIN"/>
    <property type="match status" value="1"/>
</dbReference>
<dbReference type="PANTHER" id="PTHR47926">
    <property type="entry name" value="PENTATRICOPEPTIDE REPEAT-CONTAINING PROTEIN"/>
    <property type="match status" value="1"/>
</dbReference>
<dbReference type="Pfam" id="PF20431">
    <property type="entry name" value="E_motif"/>
    <property type="match status" value="1"/>
</dbReference>
<dbReference type="Pfam" id="PF01535">
    <property type="entry name" value="PPR"/>
    <property type="match status" value="5"/>
</dbReference>
<dbReference type="Pfam" id="PF12854">
    <property type="entry name" value="PPR_1"/>
    <property type="match status" value="1"/>
</dbReference>
<dbReference type="Pfam" id="PF13041">
    <property type="entry name" value="PPR_2"/>
    <property type="match status" value="2"/>
</dbReference>
<dbReference type="SUPFAM" id="SSF48452">
    <property type="entry name" value="TPR-like"/>
    <property type="match status" value="1"/>
</dbReference>
<dbReference type="PROSITE" id="PS51375">
    <property type="entry name" value="PPR"/>
    <property type="match status" value="12"/>
</dbReference>
<accession>Q1PEU4</accession>
<accession>O22163</accession>
<comment type="similarity">
    <text evidence="1">Belongs to the PPR family. PCMP-E subfamily.</text>
</comment>
<comment type="online information" name="Pentatricopeptide repeat proteins">
    <link uri="https://ppr.plantenergy.uwa.edu.au"/>
</comment>
<sequence>MLRHAIETNVQIFTKFLVISASAVGIGYARKLFDQRPQRDDSFLSNSMIKAYLETRQYPDSFALYRDLRKETCFAPDNFTFTTLTKSCSLSMCVYQGLQLHSQIWRFGFCADMYVSTGVVDMYAKFGKMGCARNAFDEMPHRSEVSWTALISGYIRCGELDLASKLFDQMPHVKDVVIYNAMMDGFVKSGDMTSARRLFDEMTHKTVITWTTMIHGYCNIKDIDAARKLFDAMPERNLVSWNTMIGGYCQNKQPQEGIRLFQEMQATTSLDPDDVTILSVLPAISDTGALSLGEWCHCFVQRKKLDKKVKVCTAILDMYSKCGEIEKAKRIFDEMPEKQVASWNAMIHGYALNGNARAALDLFVTMMIEEKPDEITMLAVITACNHGGLVEEGRKWFHVMREMGLNAKIEHYGCMVDLLGRAGSLKEAEDLITNMPFEPNGIILSSFLSACGQYKDIERAERILKKAVELEPQNDGNYVLLRNLYAADKRWDDFGMVKNVMRKNQAKKEVGCSLIEINYIVSEFISGDTTHPHRRSIHLVLGDLLMHMNEEKYNW</sequence>